<comment type="subcellular location">
    <subcellularLocation>
        <location evidence="1">Cell membrane</location>
        <topology evidence="1">Lipid-anchor</topology>
    </subcellularLocation>
</comment>
<keyword id="KW-1003">Cell membrane</keyword>
<keyword id="KW-0449">Lipoprotein</keyword>
<keyword id="KW-0472">Membrane</keyword>
<keyword id="KW-0564">Palmitate</keyword>
<keyword id="KW-1185">Reference proteome</keyword>
<keyword id="KW-0732">Signal</keyword>
<name>YUTC_BACSU</name>
<proteinExistence type="inferred from homology"/>
<reference key="1">
    <citation type="journal article" date="1997" name="Nature">
        <title>The complete genome sequence of the Gram-positive bacterium Bacillus subtilis.</title>
        <authorList>
            <person name="Kunst F."/>
            <person name="Ogasawara N."/>
            <person name="Moszer I."/>
            <person name="Albertini A.M."/>
            <person name="Alloni G."/>
            <person name="Azevedo V."/>
            <person name="Bertero M.G."/>
            <person name="Bessieres P."/>
            <person name="Bolotin A."/>
            <person name="Borchert S."/>
            <person name="Borriss R."/>
            <person name="Boursier L."/>
            <person name="Brans A."/>
            <person name="Braun M."/>
            <person name="Brignell S.C."/>
            <person name="Bron S."/>
            <person name="Brouillet S."/>
            <person name="Bruschi C.V."/>
            <person name="Caldwell B."/>
            <person name="Capuano V."/>
            <person name="Carter N.M."/>
            <person name="Choi S.-K."/>
            <person name="Codani J.-J."/>
            <person name="Connerton I.F."/>
            <person name="Cummings N.J."/>
            <person name="Daniel R.A."/>
            <person name="Denizot F."/>
            <person name="Devine K.M."/>
            <person name="Duesterhoeft A."/>
            <person name="Ehrlich S.D."/>
            <person name="Emmerson P.T."/>
            <person name="Entian K.-D."/>
            <person name="Errington J."/>
            <person name="Fabret C."/>
            <person name="Ferrari E."/>
            <person name="Foulger D."/>
            <person name="Fritz C."/>
            <person name="Fujita M."/>
            <person name="Fujita Y."/>
            <person name="Fuma S."/>
            <person name="Galizzi A."/>
            <person name="Galleron N."/>
            <person name="Ghim S.-Y."/>
            <person name="Glaser P."/>
            <person name="Goffeau A."/>
            <person name="Golightly E.J."/>
            <person name="Grandi G."/>
            <person name="Guiseppi G."/>
            <person name="Guy B.J."/>
            <person name="Haga K."/>
            <person name="Haiech J."/>
            <person name="Harwood C.R."/>
            <person name="Henaut A."/>
            <person name="Hilbert H."/>
            <person name="Holsappel S."/>
            <person name="Hosono S."/>
            <person name="Hullo M.-F."/>
            <person name="Itaya M."/>
            <person name="Jones L.-M."/>
            <person name="Joris B."/>
            <person name="Karamata D."/>
            <person name="Kasahara Y."/>
            <person name="Klaerr-Blanchard M."/>
            <person name="Klein C."/>
            <person name="Kobayashi Y."/>
            <person name="Koetter P."/>
            <person name="Koningstein G."/>
            <person name="Krogh S."/>
            <person name="Kumano M."/>
            <person name="Kurita K."/>
            <person name="Lapidus A."/>
            <person name="Lardinois S."/>
            <person name="Lauber J."/>
            <person name="Lazarevic V."/>
            <person name="Lee S.-M."/>
            <person name="Levine A."/>
            <person name="Liu H."/>
            <person name="Masuda S."/>
            <person name="Mauel C."/>
            <person name="Medigue C."/>
            <person name="Medina N."/>
            <person name="Mellado R.P."/>
            <person name="Mizuno M."/>
            <person name="Moestl D."/>
            <person name="Nakai S."/>
            <person name="Noback M."/>
            <person name="Noone D."/>
            <person name="O'Reilly M."/>
            <person name="Ogawa K."/>
            <person name="Ogiwara A."/>
            <person name="Oudega B."/>
            <person name="Park S.-H."/>
            <person name="Parro V."/>
            <person name="Pohl T.M."/>
            <person name="Portetelle D."/>
            <person name="Porwollik S."/>
            <person name="Prescott A.M."/>
            <person name="Presecan E."/>
            <person name="Pujic P."/>
            <person name="Purnelle B."/>
            <person name="Rapoport G."/>
            <person name="Rey M."/>
            <person name="Reynolds S."/>
            <person name="Rieger M."/>
            <person name="Rivolta C."/>
            <person name="Rocha E."/>
            <person name="Roche B."/>
            <person name="Rose M."/>
            <person name="Sadaie Y."/>
            <person name="Sato T."/>
            <person name="Scanlan E."/>
            <person name="Schleich S."/>
            <person name="Schroeter R."/>
            <person name="Scoffone F."/>
            <person name="Sekiguchi J."/>
            <person name="Sekowska A."/>
            <person name="Seror S.J."/>
            <person name="Serror P."/>
            <person name="Shin B.-S."/>
            <person name="Soldo B."/>
            <person name="Sorokin A."/>
            <person name="Tacconi E."/>
            <person name="Takagi T."/>
            <person name="Takahashi H."/>
            <person name="Takemaru K."/>
            <person name="Takeuchi M."/>
            <person name="Tamakoshi A."/>
            <person name="Tanaka T."/>
            <person name="Terpstra P."/>
            <person name="Tognoni A."/>
            <person name="Tosato V."/>
            <person name="Uchiyama S."/>
            <person name="Vandenbol M."/>
            <person name="Vannier F."/>
            <person name="Vassarotti A."/>
            <person name="Viari A."/>
            <person name="Wambutt R."/>
            <person name="Wedler E."/>
            <person name="Wedler H."/>
            <person name="Weitzenegger T."/>
            <person name="Winters P."/>
            <person name="Wipat A."/>
            <person name="Yamamoto H."/>
            <person name="Yamane K."/>
            <person name="Yasumoto K."/>
            <person name="Yata K."/>
            <person name="Yoshida K."/>
            <person name="Yoshikawa H.-F."/>
            <person name="Zumstein E."/>
            <person name="Yoshikawa H."/>
            <person name="Danchin A."/>
        </authorList>
    </citation>
    <scope>NUCLEOTIDE SEQUENCE [LARGE SCALE GENOMIC DNA]</scope>
    <source>
        <strain>168</strain>
    </source>
</reference>
<protein>
    <recommendedName>
        <fullName>Uncharacterized lipoprotein YutC</fullName>
    </recommendedName>
</protein>
<gene>
    <name type="primary">yutC</name>
    <name type="ordered locus">BSU32320</name>
</gene>
<sequence length="210" mass="23644">MKRTAVSLCLLTGLLSGCGGAGLDNAQNVRNQTQNQTKPIHVSDRNEAFNRHNENEQFGYVRYQKEQFDGEQQKTPVMNREETAHMISSLTVQLPHIQDAATLVTDREALVVYKTDSKNRELTADQVKKTAASVIPRYYHVYISDNPNHMQSVENYSNLGSGSRDIREIMSGTIQEMKTSPQGSPVSENENANGETRQDMKIDRNDKNAR</sequence>
<accession>O32128</accession>
<feature type="signal peptide" evidence="1">
    <location>
        <begin position="1"/>
        <end position="17"/>
    </location>
</feature>
<feature type="chain" id="PRO_0000369431" description="Uncharacterized lipoprotein YutC">
    <location>
        <begin position="18"/>
        <end position="210"/>
    </location>
</feature>
<feature type="region of interest" description="Disordered" evidence="2">
    <location>
        <begin position="176"/>
        <end position="210"/>
    </location>
</feature>
<feature type="compositionally biased region" description="Polar residues" evidence="2">
    <location>
        <begin position="176"/>
        <end position="195"/>
    </location>
</feature>
<feature type="compositionally biased region" description="Basic and acidic residues" evidence="2">
    <location>
        <begin position="196"/>
        <end position="210"/>
    </location>
</feature>
<feature type="lipid moiety-binding region" description="N-palmitoyl cysteine" evidence="1">
    <location>
        <position position="18"/>
    </location>
</feature>
<feature type="lipid moiety-binding region" description="S-diacylglycerol cysteine" evidence="1">
    <location>
        <position position="18"/>
    </location>
</feature>
<dbReference type="EMBL" id="AL009126">
    <property type="protein sequence ID" value="CAB15222.1"/>
    <property type="molecule type" value="Genomic_DNA"/>
</dbReference>
<dbReference type="PIR" id="E70023">
    <property type="entry name" value="E70023"/>
</dbReference>
<dbReference type="RefSeq" id="NP_391112.1">
    <property type="nucleotide sequence ID" value="NC_000964.3"/>
</dbReference>
<dbReference type="RefSeq" id="WP_003243821.1">
    <property type="nucleotide sequence ID" value="NZ_OZ025638.1"/>
</dbReference>
<dbReference type="SMR" id="O32128"/>
<dbReference type="FunCoup" id="O32128">
    <property type="interactions" value="34"/>
</dbReference>
<dbReference type="STRING" id="224308.BSU32320"/>
<dbReference type="PaxDb" id="224308-BSU32320"/>
<dbReference type="DNASU" id="936674"/>
<dbReference type="EnsemblBacteria" id="CAB15222">
    <property type="protein sequence ID" value="CAB15222"/>
    <property type="gene ID" value="BSU_32320"/>
</dbReference>
<dbReference type="GeneID" id="936674"/>
<dbReference type="KEGG" id="bsu:BSU32320"/>
<dbReference type="PATRIC" id="fig|224308.179.peg.3499"/>
<dbReference type="eggNOG" id="ENOG5033B6Q">
    <property type="taxonomic scope" value="Bacteria"/>
</dbReference>
<dbReference type="InParanoid" id="O32128"/>
<dbReference type="OrthoDB" id="2691390at2"/>
<dbReference type="BioCyc" id="BSUB:BSU32320-MONOMER"/>
<dbReference type="Proteomes" id="UP000001570">
    <property type="component" value="Chromosome"/>
</dbReference>
<dbReference type="GO" id="GO:0005886">
    <property type="term" value="C:plasma membrane"/>
    <property type="evidence" value="ECO:0007669"/>
    <property type="project" value="UniProtKB-SubCell"/>
</dbReference>
<dbReference type="InterPro" id="IPR019076">
    <property type="entry name" value="Spore_lipoprot_YhcN/YlaJ-like"/>
</dbReference>
<dbReference type="Pfam" id="PF09580">
    <property type="entry name" value="Spore_YhcN_YlaJ"/>
    <property type="match status" value="1"/>
</dbReference>
<dbReference type="PROSITE" id="PS51257">
    <property type="entry name" value="PROKAR_LIPOPROTEIN"/>
    <property type="match status" value="1"/>
</dbReference>
<evidence type="ECO:0000255" key="1">
    <source>
        <dbReference type="PROSITE-ProRule" id="PRU00303"/>
    </source>
</evidence>
<evidence type="ECO:0000256" key="2">
    <source>
        <dbReference type="SAM" id="MobiDB-lite"/>
    </source>
</evidence>
<organism>
    <name type="scientific">Bacillus subtilis (strain 168)</name>
    <dbReference type="NCBI Taxonomy" id="224308"/>
    <lineage>
        <taxon>Bacteria</taxon>
        <taxon>Bacillati</taxon>
        <taxon>Bacillota</taxon>
        <taxon>Bacilli</taxon>
        <taxon>Bacillales</taxon>
        <taxon>Bacillaceae</taxon>
        <taxon>Bacillus</taxon>
    </lineage>
</organism>